<keyword id="KW-0687">Ribonucleoprotein</keyword>
<keyword id="KW-0689">Ribosomal protein</keyword>
<keyword id="KW-0694">RNA-binding</keyword>
<keyword id="KW-0699">rRNA-binding</keyword>
<proteinExistence type="inferred from homology"/>
<organism>
    <name type="scientific">Chlamydia trachomatis serovar L2 (strain ATCC VR-902B / DSM 19102 / 434/Bu)</name>
    <dbReference type="NCBI Taxonomy" id="471472"/>
    <lineage>
        <taxon>Bacteria</taxon>
        <taxon>Pseudomonadati</taxon>
        <taxon>Chlamydiota</taxon>
        <taxon>Chlamydiia</taxon>
        <taxon>Chlamydiales</taxon>
        <taxon>Chlamydiaceae</taxon>
        <taxon>Chlamydia/Chlamydophila group</taxon>
        <taxon>Chlamydia</taxon>
    </lineage>
</organism>
<feature type="chain" id="PRO_1000114410" description="Small ribosomal subunit protein bS18">
    <location>
        <begin position="1"/>
        <end position="81"/>
    </location>
</feature>
<sequence length="81" mass="9402">MNRPVHNEHRRKRFAKKCPFVSAGWKTIDYKDVTTLKRFITERGKILPRRITGVSSRFQALLAQAVKRARHVGLLPFVGED</sequence>
<dbReference type="EMBL" id="AM884176">
    <property type="protein sequence ID" value="CAP03616.1"/>
    <property type="molecule type" value="Genomic_DNA"/>
</dbReference>
<dbReference type="RefSeq" id="WP_009872184.1">
    <property type="nucleotide sequence ID" value="NC_010287.1"/>
</dbReference>
<dbReference type="RefSeq" id="YP_001654262.1">
    <property type="nucleotide sequence ID" value="NC_010287.1"/>
</dbReference>
<dbReference type="SMR" id="B0B929"/>
<dbReference type="KEGG" id="ctb:CTL0171"/>
<dbReference type="PATRIC" id="fig|471472.4.peg.185"/>
<dbReference type="HOGENOM" id="CLU_148710_2_2_0"/>
<dbReference type="Proteomes" id="UP001154402">
    <property type="component" value="Chromosome"/>
</dbReference>
<dbReference type="GO" id="GO:0022627">
    <property type="term" value="C:cytosolic small ribosomal subunit"/>
    <property type="evidence" value="ECO:0007669"/>
    <property type="project" value="TreeGrafter"/>
</dbReference>
<dbReference type="GO" id="GO:0070181">
    <property type="term" value="F:small ribosomal subunit rRNA binding"/>
    <property type="evidence" value="ECO:0007669"/>
    <property type="project" value="TreeGrafter"/>
</dbReference>
<dbReference type="GO" id="GO:0003735">
    <property type="term" value="F:structural constituent of ribosome"/>
    <property type="evidence" value="ECO:0007669"/>
    <property type="project" value="InterPro"/>
</dbReference>
<dbReference type="GO" id="GO:0006412">
    <property type="term" value="P:translation"/>
    <property type="evidence" value="ECO:0007669"/>
    <property type="project" value="UniProtKB-UniRule"/>
</dbReference>
<dbReference type="FunFam" id="4.10.640.10:FF:000004">
    <property type="entry name" value="30S ribosomal protein S18"/>
    <property type="match status" value="1"/>
</dbReference>
<dbReference type="Gene3D" id="4.10.640.10">
    <property type="entry name" value="Ribosomal protein S18"/>
    <property type="match status" value="1"/>
</dbReference>
<dbReference type="HAMAP" id="MF_00270">
    <property type="entry name" value="Ribosomal_bS18"/>
    <property type="match status" value="1"/>
</dbReference>
<dbReference type="InterPro" id="IPR001648">
    <property type="entry name" value="Ribosomal_bS18"/>
</dbReference>
<dbReference type="InterPro" id="IPR018275">
    <property type="entry name" value="Ribosomal_bS18_CS"/>
</dbReference>
<dbReference type="InterPro" id="IPR036870">
    <property type="entry name" value="Ribosomal_bS18_sf"/>
</dbReference>
<dbReference type="NCBIfam" id="TIGR00165">
    <property type="entry name" value="S18"/>
    <property type="match status" value="1"/>
</dbReference>
<dbReference type="PANTHER" id="PTHR13479">
    <property type="entry name" value="30S RIBOSOMAL PROTEIN S18"/>
    <property type="match status" value="1"/>
</dbReference>
<dbReference type="PANTHER" id="PTHR13479:SF40">
    <property type="entry name" value="SMALL RIBOSOMAL SUBUNIT PROTEIN BS18M"/>
    <property type="match status" value="1"/>
</dbReference>
<dbReference type="Pfam" id="PF01084">
    <property type="entry name" value="Ribosomal_S18"/>
    <property type="match status" value="1"/>
</dbReference>
<dbReference type="PRINTS" id="PR00974">
    <property type="entry name" value="RIBOSOMALS18"/>
</dbReference>
<dbReference type="SUPFAM" id="SSF46911">
    <property type="entry name" value="Ribosomal protein S18"/>
    <property type="match status" value="1"/>
</dbReference>
<dbReference type="PROSITE" id="PS00057">
    <property type="entry name" value="RIBOSOMAL_S18"/>
    <property type="match status" value="1"/>
</dbReference>
<reference key="1">
    <citation type="journal article" date="2008" name="Genome Res.">
        <title>Chlamydia trachomatis: genome sequence analysis of lymphogranuloma venereum isolates.</title>
        <authorList>
            <person name="Thomson N.R."/>
            <person name="Holden M.T.G."/>
            <person name="Carder C."/>
            <person name="Lennard N."/>
            <person name="Lockey S.J."/>
            <person name="Marsh P."/>
            <person name="Skipp P."/>
            <person name="O'Connor C.D."/>
            <person name="Goodhead I."/>
            <person name="Norbertzcak H."/>
            <person name="Harris B."/>
            <person name="Ormond D."/>
            <person name="Rance R."/>
            <person name="Quail M.A."/>
            <person name="Parkhill J."/>
            <person name="Stephens R.S."/>
            <person name="Clarke I.N."/>
        </authorList>
    </citation>
    <scope>NUCLEOTIDE SEQUENCE [LARGE SCALE GENOMIC DNA]</scope>
    <source>
        <strain>ATCC VR-902B / DSM 19102 / 434/Bu</strain>
    </source>
</reference>
<protein>
    <recommendedName>
        <fullName evidence="1">Small ribosomal subunit protein bS18</fullName>
    </recommendedName>
    <alternativeName>
        <fullName evidence="2">30S ribosomal protein S18</fullName>
    </alternativeName>
</protein>
<accession>B0B929</accession>
<name>RS18_CHLT2</name>
<comment type="function">
    <text evidence="1">Binds as a heterodimer with protein bS6 to the central domain of the 16S rRNA, where it helps stabilize the platform of the 30S subunit.</text>
</comment>
<comment type="subunit">
    <text evidence="1">Part of the 30S ribosomal subunit. Forms a tight heterodimer with protein bS6.</text>
</comment>
<comment type="similarity">
    <text evidence="1">Belongs to the bacterial ribosomal protein bS18 family.</text>
</comment>
<evidence type="ECO:0000255" key="1">
    <source>
        <dbReference type="HAMAP-Rule" id="MF_00270"/>
    </source>
</evidence>
<evidence type="ECO:0000305" key="2"/>
<gene>
    <name evidence="1" type="primary">rpsR</name>
    <name type="ordered locus">CTL0171</name>
</gene>